<keyword id="KW-0539">Nucleus</keyword>
<keyword id="KW-1185">Reference proteome</keyword>
<keyword id="KW-0804">Transcription</keyword>
<keyword id="KW-0805">Transcription regulation</keyword>
<feature type="chain" id="PRO_0000328134" description="Transcription initiation factor IIA subunit 2">
    <location>
        <begin position="1"/>
        <end position="115"/>
    </location>
</feature>
<dbReference type="EMBL" id="AAFI02000079">
    <property type="protein sequence ID" value="EAL64746.1"/>
    <property type="molecule type" value="Genomic_DNA"/>
</dbReference>
<dbReference type="RefSeq" id="XP_638249.1">
    <property type="nucleotide sequence ID" value="XM_633157.1"/>
</dbReference>
<dbReference type="SMR" id="Q54ND1"/>
<dbReference type="FunCoup" id="Q54ND1">
    <property type="interactions" value="353"/>
</dbReference>
<dbReference type="STRING" id="44689.Q54ND1"/>
<dbReference type="PaxDb" id="44689-DDB0216276"/>
<dbReference type="EnsemblProtists" id="EAL64746">
    <property type="protein sequence ID" value="EAL64746"/>
    <property type="gene ID" value="DDB_G0285343"/>
</dbReference>
<dbReference type="GeneID" id="8625057"/>
<dbReference type="KEGG" id="ddi:DDB_G0285343"/>
<dbReference type="dictyBase" id="DDB_G0285343">
    <property type="gene designation" value="gtf2a2"/>
</dbReference>
<dbReference type="VEuPathDB" id="AmoebaDB:DDB_G0285343"/>
<dbReference type="eggNOG" id="KOG3463">
    <property type="taxonomic scope" value="Eukaryota"/>
</dbReference>
<dbReference type="HOGENOM" id="CLU_112964_3_1_1"/>
<dbReference type="InParanoid" id="Q54ND1"/>
<dbReference type="OMA" id="QYYELYR"/>
<dbReference type="PhylomeDB" id="Q54ND1"/>
<dbReference type="Reactome" id="R-DDI-674695">
    <property type="pathway name" value="RNA Polymerase II Pre-transcription Events"/>
</dbReference>
<dbReference type="Reactome" id="R-DDI-6807505">
    <property type="pathway name" value="RNA polymerase II transcribes snRNA genes"/>
</dbReference>
<dbReference type="Reactome" id="R-DDI-73776">
    <property type="pathway name" value="RNA Polymerase II Promoter Escape"/>
</dbReference>
<dbReference type="Reactome" id="R-DDI-73779">
    <property type="pathway name" value="RNA Polymerase II Transcription Pre-Initiation And Promoter Opening"/>
</dbReference>
<dbReference type="Reactome" id="R-DDI-75953">
    <property type="pathway name" value="RNA Polymerase II Transcription Initiation"/>
</dbReference>
<dbReference type="Reactome" id="R-DDI-76042">
    <property type="pathway name" value="RNA Polymerase II Transcription Initiation And Promoter Clearance"/>
</dbReference>
<dbReference type="Reactome" id="R-DDI-9018519">
    <property type="pathway name" value="Estrogen-dependent gene expression"/>
</dbReference>
<dbReference type="PRO" id="PR:Q54ND1"/>
<dbReference type="Proteomes" id="UP000002195">
    <property type="component" value="Chromosome 4"/>
</dbReference>
<dbReference type="GO" id="GO:0005672">
    <property type="term" value="C:transcription factor TFIIA complex"/>
    <property type="evidence" value="ECO:0000250"/>
    <property type="project" value="dictyBase"/>
</dbReference>
<dbReference type="GO" id="GO:0016251">
    <property type="term" value="F:RNA polymerase II general transcription initiation factor activity"/>
    <property type="evidence" value="ECO:0000318"/>
    <property type="project" value="GO_Central"/>
</dbReference>
<dbReference type="GO" id="GO:0017025">
    <property type="term" value="F:TBP-class protein binding"/>
    <property type="evidence" value="ECO:0000318"/>
    <property type="project" value="GO_Central"/>
</dbReference>
<dbReference type="GO" id="GO:0051123">
    <property type="term" value="P:RNA polymerase II preinitiation complex assembly"/>
    <property type="evidence" value="ECO:0000318"/>
    <property type="project" value="GO_Central"/>
</dbReference>
<dbReference type="GO" id="GO:0006367">
    <property type="term" value="P:transcription initiation at RNA polymerase II promoter"/>
    <property type="evidence" value="ECO:0000250"/>
    <property type="project" value="dictyBase"/>
</dbReference>
<dbReference type="CDD" id="cd10014">
    <property type="entry name" value="TFIIA_gamma_C"/>
    <property type="match status" value="1"/>
</dbReference>
<dbReference type="CDD" id="cd10145">
    <property type="entry name" value="TFIIA_gamma_N"/>
    <property type="match status" value="1"/>
</dbReference>
<dbReference type="FunFam" id="1.10.287.190:FF:000001">
    <property type="entry name" value="Transcription initiation factor IIA subunit 2"/>
    <property type="match status" value="1"/>
</dbReference>
<dbReference type="FunFam" id="2.30.18.10:FF:000001">
    <property type="entry name" value="Transcription initiation factor IIA subunit 2"/>
    <property type="match status" value="1"/>
</dbReference>
<dbReference type="Gene3D" id="2.30.18.10">
    <property type="entry name" value="Transcription factor IIA (TFIIA), beta-barrel domain"/>
    <property type="match status" value="1"/>
</dbReference>
<dbReference type="Gene3D" id="1.10.287.190">
    <property type="entry name" value="Transcription factor IIA gamma subunit, alpha-helical domain"/>
    <property type="match status" value="1"/>
</dbReference>
<dbReference type="InterPro" id="IPR009083">
    <property type="entry name" value="TFIIA_a-hlx"/>
</dbReference>
<dbReference type="InterPro" id="IPR009088">
    <property type="entry name" value="TFIIA_b-brl"/>
</dbReference>
<dbReference type="InterPro" id="IPR003194">
    <property type="entry name" value="TFIIA_gsu"/>
</dbReference>
<dbReference type="InterPro" id="IPR015871">
    <property type="entry name" value="TFIIA_gsu_C"/>
</dbReference>
<dbReference type="InterPro" id="IPR015872">
    <property type="entry name" value="TFIIA_gsu_N"/>
</dbReference>
<dbReference type="PANTHER" id="PTHR10966">
    <property type="entry name" value="TRANSCRIPTION INITIATION FACTOR IIA SUBUNIT 2"/>
    <property type="match status" value="1"/>
</dbReference>
<dbReference type="Pfam" id="PF02751">
    <property type="entry name" value="TFIIA_gamma_C"/>
    <property type="match status" value="1"/>
</dbReference>
<dbReference type="Pfam" id="PF02268">
    <property type="entry name" value="TFIIA_gamma_N"/>
    <property type="match status" value="1"/>
</dbReference>
<dbReference type="PIRSF" id="PIRSF009415">
    <property type="entry name" value="Hum_TFIIA_gamma"/>
    <property type="match status" value="1"/>
</dbReference>
<dbReference type="SUPFAM" id="SSF47396">
    <property type="entry name" value="Transcription factor IIA (TFIIA), alpha-helical domain"/>
    <property type="match status" value="1"/>
</dbReference>
<dbReference type="SUPFAM" id="SSF50784">
    <property type="entry name" value="Transcription factor IIA (TFIIA), beta-barrel domain"/>
    <property type="match status" value="1"/>
</dbReference>
<comment type="function">
    <text evidence="1">TFIIA is a component of the transcription machinery of RNA polymerase II and plays an important role in transcriptional activation. TFIIA in a complex with tbp mediates transcriptional activity (By similarity).</text>
</comment>
<comment type="subunit">
    <text evidence="1">TFIIA is a heterodimer of the large unprocessed subunit 1 and a small subunit gamma.</text>
</comment>
<comment type="subcellular location">
    <subcellularLocation>
        <location evidence="1">Nucleus</location>
    </subcellularLocation>
</comment>
<comment type="similarity">
    <text evidence="2">Belongs to the TFIIA subunit 2 family.</text>
</comment>
<evidence type="ECO:0000250" key="1"/>
<evidence type="ECO:0000305" key="2"/>
<organism>
    <name type="scientific">Dictyostelium discoideum</name>
    <name type="common">Social amoeba</name>
    <dbReference type="NCBI Taxonomy" id="44689"/>
    <lineage>
        <taxon>Eukaryota</taxon>
        <taxon>Amoebozoa</taxon>
        <taxon>Evosea</taxon>
        <taxon>Eumycetozoa</taxon>
        <taxon>Dictyostelia</taxon>
        <taxon>Dictyosteliales</taxon>
        <taxon>Dictyosteliaceae</taxon>
        <taxon>Dictyostelium</taxon>
    </lineage>
</organism>
<name>T2AG_DICDI</name>
<reference key="1">
    <citation type="journal article" date="2005" name="Nature">
        <title>The genome of the social amoeba Dictyostelium discoideum.</title>
        <authorList>
            <person name="Eichinger L."/>
            <person name="Pachebat J.A."/>
            <person name="Gloeckner G."/>
            <person name="Rajandream M.A."/>
            <person name="Sucgang R."/>
            <person name="Berriman M."/>
            <person name="Song J."/>
            <person name="Olsen R."/>
            <person name="Szafranski K."/>
            <person name="Xu Q."/>
            <person name="Tunggal B."/>
            <person name="Kummerfeld S."/>
            <person name="Madera M."/>
            <person name="Konfortov B.A."/>
            <person name="Rivero F."/>
            <person name="Bankier A.T."/>
            <person name="Lehmann R."/>
            <person name="Hamlin N."/>
            <person name="Davies R."/>
            <person name="Gaudet P."/>
            <person name="Fey P."/>
            <person name="Pilcher K."/>
            <person name="Chen G."/>
            <person name="Saunders D."/>
            <person name="Sodergren E.J."/>
            <person name="Davis P."/>
            <person name="Kerhornou A."/>
            <person name="Nie X."/>
            <person name="Hall N."/>
            <person name="Anjard C."/>
            <person name="Hemphill L."/>
            <person name="Bason N."/>
            <person name="Farbrother P."/>
            <person name="Desany B."/>
            <person name="Just E."/>
            <person name="Morio T."/>
            <person name="Rost R."/>
            <person name="Churcher C.M."/>
            <person name="Cooper J."/>
            <person name="Haydock S."/>
            <person name="van Driessche N."/>
            <person name="Cronin A."/>
            <person name="Goodhead I."/>
            <person name="Muzny D.M."/>
            <person name="Mourier T."/>
            <person name="Pain A."/>
            <person name="Lu M."/>
            <person name="Harper D."/>
            <person name="Lindsay R."/>
            <person name="Hauser H."/>
            <person name="James K.D."/>
            <person name="Quiles M."/>
            <person name="Madan Babu M."/>
            <person name="Saito T."/>
            <person name="Buchrieser C."/>
            <person name="Wardroper A."/>
            <person name="Felder M."/>
            <person name="Thangavelu M."/>
            <person name="Johnson D."/>
            <person name="Knights A."/>
            <person name="Loulseged H."/>
            <person name="Mungall K.L."/>
            <person name="Oliver K."/>
            <person name="Price C."/>
            <person name="Quail M.A."/>
            <person name="Urushihara H."/>
            <person name="Hernandez J."/>
            <person name="Rabbinowitsch E."/>
            <person name="Steffen D."/>
            <person name="Sanders M."/>
            <person name="Ma J."/>
            <person name="Kohara Y."/>
            <person name="Sharp S."/>
            <person name="Simmonds M.N."/>
            <person name="Spiegler S."/>
            <person name="Tivey A."/>
            <person name="Sugano S."/>
            <person name="White B."/>
            <person name="Walker D."/>
            <person name="Woodward J.R."/>
            <person name="Winckler T."/>
            <person name="Tanaka Y."/>
            <person name="Shaulsky G."/>
            <person name="Schleicher M."/>
            <person name="Weinstock G.M."/>
            <person name="Rosenthal A."/>
            <person name="Cox E.C."/>
            <person name="Chisholm R.L."/>
            <person name="Gibbs R.A."/>
            <person name="Loomis W.F."/>
            <person name="Platzer M."/>
            <person name="Kay R.R."/>
            <person name="Williams J.G."/>
            <person name="Dear P.H."/>
            <person name="Noegel A.A."/>
            <person name="Barrell B.G."/>
            <person name="Kuspa A."/>
        </authorList>
    </citation>
    <scope>NUCLEOTIDE SEQUENCE [LARGE SCALE GENOMIC DNA]</scope>
    <source>
        <strain>AX4</strain>
    </source>
</reference>
<gene>
    <name type="primary">gtf2a2</name>
    <name type="synonym">tfiias</name>
    <name type="ORF">DDB_G0285343</name>
</gene>
<accession>Q54ND1</accession>
<proteinExistence type="inferred from homology"/>
<sequence>MANKQNYYELYRKSTIGEALTDTLEELLINQYISNSLYQKILTQFDKTINEALSNTVKAKTTFKGSLHTYRFCDSVWTFILENAQFKTEANEIVKVDRVKIVACDANVQDAPPPK</sequence>
<protein>
    <recommendedName>
        <fullName>Transcription initiation factor IIA subunit 2</fullName>
    </recommendedName>
    <alternativeName>
        <fullName>General transcription factor IIA subunit 2</fullName>
    </alternativeName>
    <alternativeName>
        <fullName>Transcription initiation factor IIA gamma chain</fullName>
        <shortName>TFIIA-gamma</shortName>
    </alternativeName>
</protein>